<name>GATA_BORA1</name>
<protein>
    <recommendedName>
        <fullName evidence="1">Glutamyl-tRNA(Gln) amidotransferase subunit A</fullName>
        <shortName evidence="1">Glu-ADT subunit A</shortName>
        <ecNumber evidence="1">6.3.5.7</ecNumber>
    </recommendedName>
</protein>
<organism>
    <name type="scientific">Bordetella avium (strain 197N)</name>
    <dbReference type="NCBI Taxonomy" id="360910"/>
    <lineage>
        <taxon>Bacteria</taxon>
        <taxon>Pseudomonadati</taxon>
        <taxon>Pseudomonadota</taxon>
        <taxon>Betaproteobacteria</taxon>
        <taxon>Burkholderiales</taxon>
        <taxon>Alcaligenaceae</taxon>
        <taxon>Bordetella</taxon>
    </lineage>
</organism>
<reference key="1">
    <citation type="journal article" date="2006" name="J. Bacteriol.">
        <title>Comparison of the genome sequence of the poultry pathogen Bordetella avium with those of B. bronchiseptica, B. pertussis, and B. parapertussis reveals extensive diversity in surface structures associated with host interaction.</title>
        <authorList>
            <person name="Sebaihia M."/>
            <person name="Preston A."/>
            <person name="Maskell D.J."/>
            <person name="Kuzmiak H."/>
            <person name="Connell T.D."/>
            <person name="King N.D."/>
            <person name="Orndorff P.E."/>
            <person name="Miyamoto D.M."/>
            <person name="Thomson N.R."/>
            <person name="Harris D."/>
            <person name="Goble A."/>
            <person name="Lord A."/>
            <person name="Murphy L."/>
            <person name="Quail M.A."/>
            <person name="Rutter S."/>
            <person name="Squares R."/>
            <person name="Squares S."/>
            <person name="Woodward J."/>
            <person name="Parkhill J."/>
            <person name="Temple L.M."/>
        </authorList>
    </citation>
    <scope>NUCLEOTIDE SEQUENCE [LARGE SCALE GENOMIC DNA]</scope>
    <source>
        <strain>197N</strain>
    </source>
</reference>
<gene>
    <name evidence="1" type="primary">gatA</name>
    <name type="ordered locus">BAV3178</name>
</gene>
<accession>Q2KU72</accession>
<proteinExistence type="inferred from homology"/>
<evidence type="ECO:0000255" key="1">
    <source>
        <dbReference type="HAMAP-Rule" id="MF_00120"/>
    </source>
</evidence>
<dbReference type="EC" id="6.3.5.7" evidence="1"/>
<dbReference type="EMBL" id="AM167904">
    <property type="protein sequence ID" value="CAJ50788.1"/>
    <property type="molecule type" value="Genomic_DNA"/>
</dbReference>
<dbReference type="RefSeq" id="WP_012418816.1">
    <property type="nucleotide sequence ID" value="NC_010645.1"/>
</dbReference>
<dbReference type="SMR" id="Q2KU72"/>
<dbReference type="STRING" id="360910.BAV3178"/>
<dbReference type="GeneID" id="92933565"/>
<dbReference type="KEGG" id="bav:BAV3178"/>
<dbReference type="eggNOG" id="COG0154">
    <property type="taxonomic scope" value="Bacteria"/>
</dbReference>
<dbReference type="HOGENOM" id="CLU_009600_0_3_4"/>
<dbReference type="OrthoDB" id="9811471at2"/>
<dbReference type="Proteomes" id="UP000001977">
    <property type="component" value="Chromosome"/>
</dbReference>
<dbReference type="GO" id="GO:0030956">
    <property type="term" value="C:glutamyl-tRNA(Gln) amidotransferase complex"/>
    <property type="evidence" value="ECO:0007669"/>
    <property type="project" value="InterPro"/>
</dbReference>
<dbReference type="GO" id="GO:0005524">
    <property type="term" value="F:ATP binding"/>
    <property type="evidence" value="ECO:0007669"/>
    <property type="project" value="UniProtKB-KW"/>
</dbReference>
<dbReference type="GO" id="GO:0050567">
    <property type="term" value="F:glutaminyl-tRNA synthase (glutamine-hydrolyzing) activity"/>
    <property type="evidence" value="ECO:0007669"/>
    <property type="project" value="UniProtKB-UniRule"/>
</dbReference>
<dbReference type="GO" id="GO:0006412">
    <property type="term" value="P:translation"/>
    <property type="evidence" value="ECO:0007669"/>
    <property type="project" value="UniProtKB-UniRule"/>
</dbReference>
<dbReference type="Gene3D" id="3.90.1300.10">
    <property type="entry name" value="Amidase signature (AS) domain"/>
    <property type="match status" value="1"/>
</dbReference>
<dbReference type="HAMAP" id="MF_00120">
    <property type="entry name" value="GatA"/>
    <property type="match status" value="1"/>
</dbReference>
<dbReference type="InterPro" id="IPR000120">
    <property type="entry name" value="Amidase"/>
</dbReference>
<dbReference type="InterPro" id="IPR020556">
    <property type="entry name" value="Amidase_CS"/>
</dbReference>
<dbReference type="InterPro" id="IPR023631">
    <property type="entry name" value="Amidase_dom"/>
</dbReference>
<dbReference type="InterPro" id="IPR036928">
    <property type="entry name" value="AS_sf"/>
</dbReference>
<dbReference type="InterPro" id="IPR004412">
    <property type="entry name" value="GatA"/>
</dbReference>
<dbReference type="NCBIfam" id="TIGR00132">
    <property type="entry name" value="gatA"/>
    <property type="match status" value="1"/>
</dbReference>
<dbReference type="PANTHER" id="PTHR11895:SF151">
    <property type="entry name" value="GLUTAMYL-TRNA(GLN) AMIDOTRANSFERASE SUBUNIT A"/>
    <property type="match status" value="1"/>
</dbReference>
<dbReference type="PANTHER" id="PTHR11895">
    <property type="entry name" value="TRANSAMIDASE"/>
    <property type="match status" value="1"/>
</dbReference>
<dbReference type="Pfam" id="PF01425">
    <property type="entry name" value="Amidase"/>
    <property type="match status" value="1"/>
</dbReference>
<dbReference type="SUPFAM" id="SSF75304">
    <property type="entry name" value="Amidase signature (AS) enzymes"/>
    <property type="match status" value="1"/>
</dbReference>
<dbReference type="PROSITE" id="PS00571">
    <property type="entry name" value="AMIDASES"/>
    <property type="match status" value="1"/>
</dbReference>
<comment type="function">
    <text evidence="1">Allows the formation of correctly charged Gln-tRNA(Gln) through the transamidation of misacylated Glu-tRNA(Gln) in organisms which lack glutaminyl-tRNA synthetase. The reaction takes place in the presence of glutamine and ATP through an activated gamma-phospho-Glu-tRNA(Gln).</text>
</comment>
<comment type="catalytic activity">
    <reaction evidence="1">
        <text>L-glutamyl-tRNA(Gln) + L-glutamine + ATP + H2O = L-glutaminyl-tRNA(Gln) + L-glutamate + ADP + phosphate + H(+)</text>
        <dbReference type="Rhea" id="RHEA:17521"/>
        <dbReference type="Rhea" id="RHEA-COMP:9681"/>
        <dbReference type="Rhea" id="RHEA-COMP:9684"/>
        <dbReference type="ChEBI" id="CHEBI:15377"/>
        <dbReference type="ChEBI" id="CHEBI:15378"/>
        <dbReference type="ChEBI" id="CHEBI:29985"/>
        <dbReference type="ChEBI" id="CHEBI:30616"/>
        <dbReference type="ChEBI" id="CHEBI:43474"/>
        <dbReference type="ChEBI" id="CHEBI:58359"/>
        <dbReference type="ChEBI" id="CHEBI:78520"/>
        <dbReference type="ChEBI" id="CHEBI:78521"/>
        <dbReference type="ChEBI" id="CHEBI:456216"/>
        <dbReference type="EC" id="6.3.5.7"/>
    </reaction>
</comment>
<comment type="subunit">
    <text evidence="1">Heterotrimer of A, B and C subunits.</text>
</comment>
<comment type="similarity">
    <text evidence="1">Belongs to the amidase family. GatA subfamily.</text>
</comment>
<feature type="chain" id="PRO_0000241076" description="Glutamyl-tRNA(Gln) amidotransferase subunit A">
    <location>
        <begin position="1"/>
        <end position="510"/>
    </location>
</feature>
<feature type="active site" description="Charge relay system" evidence="1">
    <location>
        <position position="82"/>
    </location>
</feature>
<feature type="active site" description="Charge relay system" evidence="1">
    <location>
        <position position="157"/>
    </location>
</feature>
<feature type="active site" description="Acyl-ester intermediate" evidence="1">
    <location>
        <position position="181"/>
    </location>
</feature>
<keyword id="KW-0067">ATP-binding</keyword>
<keyword id="KW-0436">Ligase</keyword>
<keyword id="KW-0547">Nucleotide-binding</keyword>
<keyword id="KW-0648">Protein biosynthesis</keyword>
<keyword id="KW-1185">Reference proteome</keyword>
<sequence length="510" mass="53180">MSQSALHTEFGDIAGLRAALAERRVSAVELAESGLAAAQAAAGLNAFLHIDPELTLVQARAADAALAAGTAGPLAGIPIAHKDAFVTRGWRSTAGSKMLRDYLSPFDATVVERLQAAGAVSLGKLNCDEFAMGSGNENSAFGPARNPWDLAAVPGGSSGGSAAAVAARLVAGATGTDTGGSVRQPAALCGVSGIKPTYGTVSRYGMIAFGSSLDQAGPLAPSSRDLLELLDVMSGFDPRDATSLERCDDAANAPGRIRAAFDAAQNGYQAAGSQPLKGLRIGVPAEFFGAGLTPDVAAAVEAALRQFEALGAERVAISLPRTELAIPAYYVIAPAEASSNLARFDGVRYGHRAAEYSDLNEMISRSRAEGFGDEVKRRILIGAYVLSHGYYDAYYLQAQRLRRLIAQDFQRAFAGQCDVIMGPVAPSVAKNIGENRDDPTADWLADVYTLGVSLAGLPAMSVPCGFGAAGRPVGLQIIGNYFDEGRLLAIADRYQQVTDWHQRTPATQDA</sequence>